<proteinExistence type="inferred from homology"/>
<keyword id="KW-0072">Autophagy</keyword>
<keyword id="KW-0968">Cytoplasmic vesicle</keyword>
<keyword id="KW-0449">Lipoprotein</keyword>
<keyword id="KW-0472">Membrane</keyword>
<keyword id="KW-0653">Protein transport</keyword>
<keyword id="KW-0813">Transport</keyword>
<keyword id="KW-0833">Ubl conjugation pathway</keyword>
<keyword id="KW-0926">Vacuole</keyword>
<organism>
    <name type="scientific">Phaeosphaeria nodorum (strain SN15 / ATCC MYA-4574 / FGSC 10173)</name>
    <name type="common">Glume blotch fungus</name>
    <name type="synonym">Parastagonospora nodorum</name>
    <dbReference type="NCBI Taxonomy" id="321614"/>
    <lineage>
        <taxon>Eukaryota</taxon>
        <taxon>Fungi</taxon>
        <taxon>Dikarya</taxon>
        <taxon>Ascomycota</taxon>
        <taxon>Pezizomycotina</taxon>
        <taxon>Dothideomycetes</taxon>
        <taxon>Pleosporomycetidae</taxon>
        <taxon>Pleosporales</taxon>
        <taxon>Pleosporineae</taxon>
        <taxon>Phaeosphaeriaceae</taxon>
        <taxon>Parastagonospora</taxon>
    </lineage>
</organism>
<reference key="1">
    <citation type="journal article" date="2007" name="Plant Cell">
        <title>Dothideomycete-plant interactions illuminated by genome sequencing and EST analysis of the wheat pathogen Stagonospora nodorum.</title>
        <authorList>
            <person name="Hane J.K."/>
            <person name="Lowe R.G.T."/>
            <person name="Solomon P.S."/>
            <person name="Tan K.-C."/>
            <person name="Schoch C.L."/>
            <person name="Spatafora J.W."/>
            <person name="Crous P.W."/>
            <person name="Kodira C.D."/>
            <person name="Birren B.W."/>
            <person name="Galagan J.E."/>
            <person name="Torriani S.F.F."/>
            <person name="McDonald B.A."/>
            <person name="Oliver R.P."/>
        </authorList>
    </citation>
    <scope>NUCLEOTIDE SEQUENCE [LARGE SCALE GENOMIC DNA]</scope>
    <source>
        <strain>SN15 / ATCC MYA-4574 / FGSC 10173</strain>
    </source>
</reference>
<accession>Q0V3Y9</accession>
<dbReference type="EMBL" id="CH445326">
    <property type="protein sequence ID" value="EAT90924.1"/>
    <property type="molecule type" value="Genomic_DNA"/>
</dbReference>
<dbReference type="RefSeq" id="XP_001791921.1">
    <property type="nucleotide sequence ID" value="XM_001791869.1"/>
</dbReference>
<dbReference type="SMR" id="Q0V3Y9"/>
<dbReference type="FunCoup" id="Q0V3Y9">
    <property type="interactions" value="510"/>
</dbReference>
<dbReference type="STRING" id="321614.Q0V3Y9"/>
<dbReference type="EnsemblFungi" id="SNOT_01275">
    <property type="protein sequence ID" value="SNOT_01275"/>
    <property type="gene ID" value="SNOG_01275"/>
</dbReference>
<dbReference type="GeneID" id="5968766"/>
<dbReference type="KEGG" id="pno:SNOG_01275"/>
<dbReference type="VEuPathDB" id="FungiDB:JI435_012750"/>
<dbReference type="eggNOG" id="KOG1654">
    <property type="taxonomic scope" value="Eukaryota"/>
</dbReference>
<dbReference type="HOGENOM" id="CLU_119276_0_1_1"/>
<dbReference type="InParanoid" id="Q0V3Y9"/>
<dbReference type="OMA" id="AVYQEHK"/>
<dbReference type="OrthoDB" id="6738456at2759"/>
<dbReference type="Proteomes" id="UP000001055">
    <property type="component" value="Unassembled WGS sequence"/>
</dbReference>
<dbReference type="GO" id="GO:0000421">
    <property type="term" value="C:autophagosome membrane"/>
    <property type="evidence" value="ECO:0000318"/>
    <property type="project" value="GO_Central"/>
</dbReference>
<dbReference type="GO" id="GO:0031410">
    <property type="term" value="C:cytoplasmic vesicle"/>
    <property type="evidence" value="ECO:0007669"/>
    <property type="project" value="UniProtKB-KW"/>
</dbReference>
<dbReference type="GO" id="GO:0000329">
    <property type="term" value="C:fungal-type vacuole membrane"/>
    <property type="evidence" value="ECO:0000318"/>
    <property type="project" value="GO_Central"/>
</dbReference>
<dbReference type="GO" id="GO:0008429">
    <property type="term" value="F:phosphatidylethanolamine binding"/>
    <property type="evidence" value="ECO:0000318"/>
    <property type="project" value="GO_Central"/>
</dbReference>
<dbReference type="GO" id="GO:0000045">
    <property type="term" value="P:autophagosome assembly"/>
    <property type="evidence" value="ECO:0000318"/>
    <property type="project" value="GO_Central"/>
</dbReference>
<dbReference type="GO" id="GO:0097352">
    <property type="term" value="P:autophagosome maturation"/>
    <property type="evidence" value="ECO:0000318"/>
    <property type="project" value="GO_Central"/>
</dbReference>
<dbReference type="GO" id="GO:0006995">
    <property type="term" value="P:cellular response to nitrogen starvation"/>
    <property type="evidence" value="ECO:0000318"/>
    <property type="project" value="GO_Central"/>
</dbReference>
<dbReference type="GO" id="GO:0000423">
    <property type="term" value="P:mitophagy"/>
    <property type="evidence" value="ECO:0000318"/>
    <property type="project" value="GO_Central"/>
</dbReference>
<dbReference type="GO" id="GO:0015031">
    <property type="term" value="P:protein transport"/>
    <property type="evidence" value="ECO:0007669"/>
    <property type="project" value="UniProtKB-KW"/>
</dbReference>
<dbReference type="CDD" id="cd16128">
    <property type="entry name" value="Ubl_ATG8"/>
    <property type="match status" value="1"/>
</dbReference>
<dbReference type="FunFam" id="3.10.20.90:FF:000010">
    <property type="entry name" value="Autophagy-related protein"/>
    <property type="match status" value="1"/>
</dbReference>
<dbReference type="Gene3D" id="3.10.20.90">
    <property type="entry name" value="Phosphatidylinositol 3-kinase Catalytic Subunit, Chain A, domain 1"/>
    <property type="match status" value="1"/>
</dbReference>
<dbReference type="InterPro" id="IPR004241">
    <property type="entry name" value="Atg8-like"/>
</dbReference>
<dbReference type="InterPro" id="IPR029071">
    <property type="entry name" value="Ubiquitin-like_domsf"/>
</dbReference>
<dbReference type="PANTHER" id="PTHR10969">
    <property type="entry name" value="MICROTUBULE-ASSOCIATED PROTEINS 1A/1B LIGHT CHAIN 3-RELATED"/>
    <property type="match status" value="1"/>
</dbReference>
<dbReference type="Pfam" id="PF02991">
    <property type="entry name" value="ATG8"/>
    <property type="match status" value="1"/>
</dbReference>
<dbReference type="SUPFAM" id="SSF54236">
    <property type="entry name" value="Ubiquitin-like"/>
    <property type="match status" value="1"/>
</dbReference>
<comment type="function">
    <text evidence="1">Ubiquitin-like modifier involved in autophagosome formation. With ATG4, mediates the delivery of the autophagosomes to the vacuole via the microtubule cytoskeleton. Required for selective autophagic degradation of the nucleus (nucleophagy) as well as for mitophagy which contributes to regulate mitochondrial quantity and quality by eliminating the mitochondria to a basal level to fulfill cellular energy requirements and preventing excess ROS production. Participates also in membrane fusion events that take place in the early secretory pathway. Also involved in endoplasmic reticulum-specific autophagic process and is essential for the survival of cells subjected to severe ER stress. The ATG8-PE conjugate mediates tethering between adjacent membranes and stimulates membrane hemifusion, leading to expansion of the autophagosomal membrane during autophagy.</text>
</comment>
<comment type="subcellular location">
    <subcellularLocation>
        <location evidence="1">Cytoplasmic vesicle</location>
        <location evidence="1">Autophagosome membrane</location>
        <topology evidence="1">Lipid-anchor</topology>
    </subcellularLocation>
    <subcellularLocation>
        <location evidence="1">Vacuole membrane</location>
        <topology evidence="1">Lipid-anchor</topology>
    </subcellularLocation>
</comment>
<comment type="PTM">
    <text evidence="1">The C-terminal 3 residues are removed by ATG4 to expose Gly-116 at the C-terminus. The c-terminal Gly is then amidated with phosphatidylethanolamine by an activating system similar to that for ubiquitin.</text>
</comment>
<comment type="similarity">
    <text evidence="2">Belongs to the ATG8 family.</text>
</comment>
<feature type="chain" id="PRO_0000317896" description="Autophagy-related protein 8">
    <location>
        <begin position="1"/>
        <end position="116"/>
    </location>
</feature>
<feature type="propeptide" id="PRO_0000317897" description="Removed in mature form" evidence="1">
    <location>
        <begin position="117"/>
        <end position="119"/>
    </location>
</feature>
<feature type="site" description="Cleavage; by ATG4" evidence="1">
    <location>
        <begin position="116"/>
        <end position="117"/>
    </location>
</feature>
<feature type="lipid moiety-binding region" description="Phosphatidylethanolamine amidated glycine" evidence="1">
    <location>
        <position position="116"/>
    </location>
</feature>
<gene>
    <name type="primary">ATG8</name>
    <name type="ORF">SNOG_01275</name>
</gene>
<evidence type="ECO:0000250" key="1">
    <source>
        <dbReference type="UniProtKB" id="P38182"/>
    </source>
</evidence>
<evidence type="ECO:0000305" key="2"/>
<sequence length="119" mass="13876">MRSKFKDEHPFEKRKAEAERIRQKYNDRIPVICEKVEKSDIATIDKKKYLVPADLTVGQFVYVIRKRIKLSPEKAIFIFVDEVLPPTAALMSSIYEEHKDEDGFLYITYSGENTFGEAI</sequence>
<protein>
    <recommendedName>
        <fullName>Autophagy-related protein 8</fullName>
    </recommendedName>
    <alternativeName>
        <fullName>Autophagy-related ubiquitin-like modifier ATG8</fullName>
    </alternativeName>
</protein>
<name>ATG8_PHANO</name>